<dbReference type="EMBL" id="CP001107">
    <property type="protein sequence ID" value="ACR75437.1"/>
    <property type="molecule type" value="Genomic_DNA"/>
</dbReference>
<dbReference type="RefSeq" id="WP_012742535.1">
    <property type="nucleotide sequence ID" value="NZ_CAXSYD010000009.1"/>
</dbReference>
<dbReference type="SMR" id="C4Z9Z6"/>
<dbReference type="STRING" id="515619.EUBREC_1693"/>
<dbReference type="PaxDb" id="515619-EUBREC_1693"/>
<dbReference type="GeneID" id="86988496"/>
<dbReference type="KEGG" id="ere:EUBREC_1693"/>
<dbReference type="HOGENOM" id="CLU_061463_3_2_9"/>
<dbReference type="Proteomes" id="UP000001477">
    <property type="component" value="Chromosome"/>
</dbReference>
<dbReference type="GO" id="GO:0005737">
    <property type="term" value="C:cytoplasm"/>
    <property type="evidence" value="ECO:0007669"/>
    <property type="project" value="UniProtKB-ARBA"/>
</dbReference>
<dbReference type="GO" id="GO:1990904">
    <property type="term" value="C:ribonucleoprotein complex"/>
    <property type="evidence" value="ECO:0007669"/>
    <property type="project" value="UniProtKB-KW"/>
</dbReference>
<dbReference type="GO" id="GO:0005840">
    <property type="term" value="C:ribosome"/>
    <property type="evidence" value="ECO:0007669"/>
    <property type="project" value="UniProtKB-KW"/>
</dbReference>
<dbReference type="GO" id="GO:0019843">
    <property type="term" value="F:rRNA binding"/>
    <property type="evidence" value="ECO:0007669"/>
    <property type="project" value="UniProtKB-UniRule"/>
</dbReference>
<dbReference type="GO" id="GO:0003735">
    <property type="term" value="F:structural constituent of ribosome"/>
    <property type="evidence" value="ECO:0007669"/>
    <property type="project" value="InterPro"/>
</dbReference>
<dbReference type="GO" id="GO:0006412">
    <property type="term" value="P:translation"/>
    <property type="evidence" value="ECO:0007669"/>
    <property type="project" value="UniProtKB-UniRule"/>
</dbReference>
<dbReference type="HAMAP" id="MF_01363">
    <property type="entry name" value="Ribosomal_bL21"/>
    <property type="match status" value="1"/>
</dbReference>
<dbReference type="InterPro" id="IPR028909">
    <property type="entry name" value="bL21-like"/>
</dbReference>
<dbReference type="InterPro" id="IPR036164">
    <property type="entry name" value="bL21-like_sf"/>
</dbReference>
<dbReference type="InterPro" id="IPR001787">
    <property type="entry name" value="Ribosomal_bL21"/>
</dbReference>
<dbReference type="InterPro" id="IPR018258">
    <property type="entry name" value="Ribosomal_bL21_CS"/>
</dbReference>
<dbReference type="NCBIfam" id="TIGR00061">
    <property type="entry name" value="L21"/>
    <property type="match status" value="1"/>
</dbReference>
<dbReference type="PANTHER" id="PTHR21349">
    <property type="entry name" value="50S RIBOSOMAL PROTEIN L21"/>
    <property type="match status" value="1"/>
</dbReference>
<dbReference type="PANTHER" id="PTHR21349:SF0">
    <property type="entry name" value="LARGE RIBOSOMAL SUBUNIT PROTEIN BL21M"/>
    <property type="match status" value="1"/>
</dbReference>
<dbReference type="Pfam" id="PF00829">
    <property type="entry name" value="Ribosomal_L21p"/>
    <property type="match status" value="1"/>
</dbReference>
<dbReference type="SUPFAM" id="SSF141091">
    <property type="entry name" value="L21p-like"/>
    <property type="match status" value="1"/>
</dbReference>
<dbReference type="PROSITE" id="PS01169">
    <property type="entry name" value="RIBOSOMAL_L21"/>
    <property type="match status" value="1"/>
</dbReference>
<protein>
    <recommendedName>
        <fullName evidence="1">Large ribosomal subunit protein bL21</fullName>
    </recommendedName>
    <alternativeName>
        <fullName evidence="2">50S ribosomal protein L21</fullName>
    </alternativeName>
</protein>
<reference key="1">
    <citation type="journal article" date="2009" name="Proc. Natl. Acad. Sci. U.S.A.">
        <title>Characterizing a model human gut microbiota composed of members of its two dominant bacterial phyla.</title>
        <authorList>
            <person name="Mahowald M.A."/>
            <person name="Rey F.E."/>
            <person name="Seedorf H."/>
            <person name="Turnbaugh P.J."/>
            <person name="Fulton R.S."/>
            <person name="Wollam A."/>
            <person name="Shah N."/>
            <person name="Wang C."/>
            <person name="Magrini V."/>
            <person name="Wilson R.K."/>
            <person name="Cantarel B.L."/>
            <person name="Coutinho P.M."/>
            <person name="Henrissat B."/>
            <person name="Crock L.W."/>
            <person name="Russell A."/>
            <person name="Verberkmoes N.C."/>
            <person name="Hettich R.L."/>
            <person name="Gordon J.I."/>
        </authorList>
    </citation>
    <scope>NUCLEOTIDE SEQUENCE [LARGE SCALE GENOMIC DNA]</scope>
    <source>
        <strain>ATCC 33656 / DSM 3377 / JCM 17463 / KCTC 5835 / LMG 30912 / VPI 0990</strain>
    </source>
</reference>
<comment type="function">
    <text evidence="1">This protein binds to 23S rRNA in the presence of protein L20.</text>
</comment>
<comment type="subunit">
    <text evidence="1">Part of the 50S ribosomal subunit. Contacts protein L20.</text>
</comment>
<comment type="similarity">
    <text evidence="1">Belongs to the bacterial ribosomal protein bL21 family.</text>
</comment>
<feature type="chain" id="PRO_1000214890" description="Large ribosomal subunit protein bL21">
    <location>
        <begin position="1"/>
        <end position="102"/>
    </location>
</feature>
<keyword id="KW-0687">Ribonucleoprotein</keyword>
<keyword id="KW-0689">Ribosomal protein</keyword>
<keyword id="KW-0694">RNA-binding</keyword>
<keyword id="KW-0699">rRNA-binding</keyword>
<sequence length="102" mass="11067">MYAIIATGGKQYKVSEGDIITIEKLGVEAGEKVTFDQVLVVGGDDLKVGDPTVAGATVEASVVKEGRAKKVIVYKYKRKTGYHKKNGHRQAFTQVKIEKING</sequence>
<organism>
    <name type="scientific">Agathobacter rectalis (strain ATCC 33656 / DSM 3377 / JCM 17463 / KCTC 5835 / VPI 0990)</name>
    <name type="common">Eubacterium rectale</name>
    <dbReference type="NCBI Taxonomy" id="515619"/>
    <lineage>
        <taxon>Bacteria</taxon>
        <taxon>Bacillati</taxon>
        <taxon>Bacillota</taxon>
        <taxon>Clostridia</taxon>
        <taxon>Lachnospirales</taxon>
        <taxon>Lachnospiraceae</taxon>
        <taxon>Agathobacter</taxon>
    </lineage>
</organism>
<proteinExistence type="inferred from homology"/>
<gene>
    <name evidence="1" type="primary">rplU</name>
    <name type="ordered locus">EUBREC_1693</name>
</gene>
<evidence type="ECO:0000255" key="1">
    <source>
        <dbReference type="HAMAP-Rule" id="MF_01363"/>
    </source>
</evidence>
<evidence type="ECO:0000305" key="2"/>
<accession>C4Z9Z6</accession>
<name>RL21_AGARV</name>